<organism>
    <name type="scientific">Homo sapiens</name>
    <name type="common">Human</name>
    <dbReference type="NCBI Taxonomy" id="9606"/>
    <lineage>
        <taxon>Eukaryota</taxon>
        <taxon>Metazoa</taxon>
        <taxon>Chordata</taxon>
        <taxon>Craniata</taxon>
        <taxon>Vertebrata</taxon>
        <taxon>Euteleostomi</taxon>
        <taxon>Mammalia</taxon>
        <taxon>Eutheria</taxon>
        <taxon>Euarchontoglires</taxon>
        <taxon>Primates</taxon>
        <taxon>Haplorrhini</taxon>
        <taxon>Catarrhini</taxon>
        <taxon>Hominidae</taxon>
        <taxon>Homo</taxon>
    </lineage>
</organism>
<accession>Q96R05</accession>
<accession>B2R517</accession>
<accession>Q5SWJ4</accession>
<proteinExistence type="evidence at protein level"/>
<keyword id="KW-0002">3D-structure</keyword>
<keyword id="KW-0963">Cytoplasm</keyword>
<keyword id="KW-1267">Proteomics identification</keyword>
<keyword id="KW-1185">Reference proteome</keyword>
<keyword id="KW-0683">Retinol-binding</keyword>
<keyword id="KW-0813">Transport</keyword>
<keyword id="KW-0845">Vitamin A</keyword>
<name>RET7_HUMAN</name>
<dbReference type="EMBL" id="AY145438">
    <property type="protein sequence ID" value="AAN61071.1"/>
    <property type="molecule type" value="mRNA"/>
</dbReference>
<dbReference type="EMBL" id="AF399927">
    <property type="protein sequence ID" value="AAK85409.1"/>
    <property type="molecule type" value="mRNA"/>
</dbReference>
<dbReference type="EMBL" id="AK312027">
    <property type="protein sequence ID" value="BAG34964.1"/>
    <property type="molecule type" value="mRNA"/>
</dbReference>
<dbReference type="EMBL" id="AL603962">
    <property type="status" value="NOT_ANNOTATED_CDS"/>
    <property type="molecule type" value="Genomic_DNA"/>
</dbReference>
<dbReference type="EMBL" id="AL590639">
    <property type="status" value="NOT_ANNOTATED_CDS"/>
    <property type="molecule type" value="Genomic_DNA"/>
</dbReference>
<dbReference type="EMBL" id="CH471130">
    <property type="protein sequence ID" value="EAW71638.1"/>
    <property type="molecule type" value="Genomic_DNA"/>
</dbReference>
<dbReference type="EMBL" id="BC063013">
    <property type="protein sequence ID" value="AAH63013.1"/>
    <property type="molecule type" value="mRNA"/>
</dbReference>
<dbReference type="CCDS" id="CCDS109.1"/>
<dbReference type="RefSeq" id="NP_443192.1">
    <property type="nucleotide sequence ID" value="NM_052960.3"/>
</dbReference>
<dbReference type="PDB" id="1LPJ">
    <property type="method" value="X-ray"/>
    <property type="resolution" value="2.00 A"/>
    <property type="chains" value="A=2-134"/>
</dbReference>
<dbReference type="PDB" id="6AT8">
    <property type="method" value="X-ray"/>
    <property type="resolution" value="1.10 A"/>
    <property type="chains" value="A=2-134"/>
</dbReference>
<dbReference type="PDB" id="6E6K">
    <property type="method" value="X-ray"/>
    <property type="resolution" value="1.30 A"/>
    <property type="chains" value="A=2-134"/>
</dbReference>
<dbReference type="PDBsum" id="1LPJ"/>
<dbReference type="PDBsum" id="6AT8"/>
<dbReference type="PDBsum" id="6E6K"/>
<dbReference type="SMR" id="Q96R05"/>
<dbReference type="BioGRID" id="125500">
    <property type="interactions" value="18"/>
</dbReference>
<dbReference type="FunCoup" id="Q96R05">
    <property type="interactions" value="395"/>
</dbReference>
<dbReference type="IntAct" id="Q96R05">
    <property type="interactions" value="9"/>
</dbReference>
<dbReference type="STRING" id="9606.ENSP00000294435"/>
<dbReference type="DrugBank" id="DB00162">
    <property type="generic name" value="Vitamin A"/>
</dbReference>
<dbReference type="DrugCentral" id="Q96R05"/>
<dbReference type="GlyGen" id="Q96R05">
    <property type="glycosylation" value="1 site, 1 O-linked glycan (1 site)"/>
</dbReference>
<dbReference type="BioMuta" id="RBP7"/>
<dbReference type="DMDM" id="20139582"/>
<dbReference type="jPOST" id="Q96R05"/>
<dbReference type="MassIVE" id="Q96R05"/>
<dbReference type="PaxDb" id="9606-ENSP00000294435"/>
<dbReference type="PeptideAtlas" id="Q96R05"/>
<dbReference type="ProteomicsDB" id="77921"/>
<dbReference type="Pumba" id="Q96R05"/>
<dbReference type="Antibodypedia" id="27796">
    <property type="antibodies" value="129 antibodies from 21 providers"/>
</dbReference>
<dbReference type="DNASU" id="116362"/>
<dbReference type="Ensembl" id="ENST00000294435.8">
    <property type="protein sequence ID" value="ENSP00000294435.7"/>
    <property type="gene ID" value="ENSG00000162444.12"/>
</dbReference>
<dbReference type="GeneID" id="116362"/>
<dbReference type="KEGG" id="hsa:116362"/>
<dbReference type="MANE-Select" id="ENST00000294435.8">
    <property type="protein sequence ID" value="ENSP00000294435.7"/>
    <property type="RefSeq nucleotide sequence ID" value="NM_052960.3"/>
    <property type="RefSeq protein sequence ID" value="NP_443192.1"/>
</dbReference>
<dbReference type="UCSC" id="uc001aqq.4">
    <property type="organism name" value="human"/>
</dbReference>
<dbReference type="AGR" id="HGNC:30316"/>
<dbReference type="CTD" id="116362"/>
<dbReference type="DisGeNET" id="116362"/>
<dbReference type="GeneCards" id="RBP7"/>
<dbReference type="HGNC" id="HGNC:30316">
    <property type="gene designation" value="RBP7"/>
</dbReference>
<dbReference type="HPA" id="ENSG00000162444">
    <property type="expression patterns" value="Tissue enhanced (adipose tissue, breast)"/>
</dbReference>
<dbReference type="MIM" id="608604">
    <property type="type" value="gene"/>
</dbReference>
<dbReference type="neXtProt" id="NX_Q96R05"/>
<dbReference type="OpenTargets" id="ENSG00000162444"/>
<dbReference type="PharmGKB" id="PA134988307"/>
<dbReference type="VEuPathDB" id="HostDB:ENSG00000162444"/>
<dbReference type="eggNOG" id="KOG4015">
    <property type="taxonomic scope" value="Eukaryota"/>
</dbReference>
<dbReference type="GeneTree" id="ENSGT00940000162218"/>
<dbReference type="HOGENOM" id="CLU_113772_5_1_1"/>
<dbReference type="InParanoid" id="Q96R05"/>
<dbReference type="OMA" id="YFVQFKI"/>
<dbReference type="OrthoDB" id="354351at2759"/>
<dbReference type="PAN-GO" id="Q96R05">
    <property type="GO annotations" value="4 GO annotations based on evolutionary models"/>
</dbReference>
<dbReference type="PhylomeDB" id="Q96R05"/>
<dbReference type="TreeFam" id="TF316894"/>
<dbReference type="PathwayCommons" id="Q96R05"/>
<dbReference type="SignaLink" id="Q96R05"/>
<dbReference type="BioGRID-ORCS" id="116362">
    <property type="hits" value="12 hits in 1138 CRISPR screens"/>
</dbReference>
<dbReference type="ChiTaRS" id="RBP7">
    <property type="organism name" value="human"/>
</dbReference>
<dbReference type="EvolutionaryTrace" id="Q96R05"/>
<dbReference type="GenomeRNAi" id="116362"/>
<dbReference type="Pharos" id="Q96R05">
    <property type="development level" value="Tbio"/>
</dbReference>
<dbReference type="PRO" id="PR:Q96R05"/>
<dbReference type="Proteomes" id="UP000005640">
    <property type="component" value="Chromosome 1"/>
</dbReference>
<dbReference type="RNAct" id="Q96R05">
    <property type="molecule type" value="protein"/>
</dbReference>
<dbReference type="Bgee" id="ENSG00000162444">
    <property type="expression patterns" value="Expressed in adipose tissue of abdominal region and 171 other cell types or tissues"/>
</dbReference>
<dbReference type="ExpressionAtlas" id="Q96R05">
    <property type="expression patterns" value="baseline and differential"/>
</dbReference>
<dbReference type="GO" id="GO:0005829">
    <property type="term" value="C:cytosol"/>
    <property type="evidence" value="ECO:0000318"/>
    <property type="project" value="GO_Central"/>
</dbReference>
<dbReference type="GO" id="GO:0005634">
    <property type="term" value="C:nucleus"/>
    <property type="evidence" value="ECO:0000318"/>
    <property type="project" value="GO_Central"/>
</dbReference>
<dbReference type="GO" id="GO:0005504">
    <property type="term" value="F:fatty acid binding"/>
    <property type="evidence" value="ECO:0000318"/>
    <property type="project" value="GO_Central"/>
</dbReference>
<dbReference type="GO" id="GO:0016918">
    <property type="term" value="F:retinal binding"/>
    <property type="evidence" value="ECO:0007669"/>
    <property type="project" value="UniProtKB-KW"/>
</dbReference>
<dbReference type="GO" id="GO:0019841">
    <property type="term" value="F:retinol binding"/>
    <property type="evidence" value="ECO:0007669"/>
    <property type="project" value="UniProtKB-KW"/>
</dbReference>
<dbReference type="GO" id="GO:0015908">
    <property type="term" value="P:fatty acid transport"/>
    <property type="evidence" value="ECO:0000318"/>
    <property type="project" value="GO_Central"/>
</dbReference>
<dbReference type="CDD" id="cd19465">
    <property type="entry name" value="CRBP4"/>
    <property type="match status" value="1"/>
</dbReference>
<dbReference type="FunFam" id="2.40.128.20:FF:000001">
    <property type="entry name" value="Fatty acid-binding protein, adipocyte"/>
    <property type="match status" value="1"/>
</dbReference>
<dbReference type="Gene3D" id="2.40.128.20">
    <property type="match status" value="1"/>
</dbReference>
<dbReference type="InterPro" id="IPR012674">
    <property type="entry name" value="Calycin"/>
</dbReference>
<dbReference type="InterPro" id="IPR000463">
    <property type="entry name" value="Fatty_acid-bd"/>
</dbReference>
<dbReference type="InterPro" id="IPR031259">
    <property type="entry name" value="ILBP"/>
</dbReference>
<dbReference type="InterPro" id="IPR000566">
    <property type="entry name" value="Lipocln_cytosolic_FA-bd_dom"/>
</dbReference>
<dbReference type="PANTHER" id="PTHR11955">
    <property type="entry name" value="FATTY ACID BINDING PROTEIN"/>
    <property type="match status" value="1"/>
</dbReference>
<dbReference type="Pfam" id="PF00061">
    <property type="entry name" value="Lipocalin"/>
    <property type="match status" value="1"/>
</dbReference>
<dbReference type="PRINTS" id="PR00178">
    <property type="entry name" value="FATTYACIDBP"/>
</dbReference>
<dbReference type="SUPFAM" id="SSF50814">
    <property type="entry name" value="Lipocalins"/>
    <property type="match status" value="1"/>
</dbReference>
<dbReference type="PROSITE" id="PS00214">
    <property type="entry name" value="FABP"/>
    <property type="match status" value="1"/>
</dbReference>
<feature type="chain" id="PRO_0000067403" description="Retinoid-binding protein 7">
    <location>
        <begin position="1"/>
        <end position="134"/>
    </location>
</feature>
<feature type="strand" evidence="4">
    <location>
        <begin position="7"/>
        <end position="15"/>
    </location>
</feature>
<feature type="helix" evidence="4">
    <location>
        <begin position="17"/>
        <end position="24"/>
    </location>
</feature>
<feature type="helix" evidence="4">
    <location>
        <begin position="28"/>
        <end position="36"/>
    </location>
</feature>
<feature type="strand" evidence="4">
    <location>
        <begin position="40"/>
        <end position="46"/>
    </location>
</feature>
<feature type="strand" evidence="4">
    <location>
        <begin position="49"/>
        <end position="55"/>
    </location>
</feature>
<feature type="strand" evidence="4">
    <location>
        <begin position="60"/>
        <end position="66"/>
    </location>
</feature>
<feature type="strand" evidence="4">
    <location>
        <begin position="71"/>
        <end position="73"/>
    </location>
</feature>
<feature type="turn" evidence="4">
    <location>
        <begin position="76"/>
        <end position="79"/>
    </location>
</feature>
<feature type="strand" evidence="4">
    <location>
        <begin position="83"/>
        <end position="90"/>
    </location>
</feature>
<feature type="strand" evidence="4">
    <location>
        <begin position="93"/>
        <end position="104"/>
    </location>
</feature>
<feature type="strand" evidence="4">
    <location>
        <begin position="106"/>
        <end position="112"/>
    </location>
</feature>
<feature type="strand" evidence="4">
    <location>
        <begin position="115"/>
        <end position="122"/>
    </location>
</feature>
<feature type="strand" evidence="4">
    <location>
        <begin position="125"/>
        <end position="133"/>
    </location>
</feature>
<evidence type="ECO:0000250" key="1"/>
<evidence type="ECO:0000269" key="2">
    <source>
    </source>
</evidence>
<evidence type="ECO:0000305" key="3"/>
<evidence type="ECO:0007829" key="4">
    <source>
        <dbReference type="PDB" id="6AT8"/>
    </source>
</evidence>
<gene>
    <name type="primary">RBP7</name>
</gene>
<comment type="function">
    <text evidence="2">Intracellular transport of retinol.</text>
</comment>
<comment type="interaction">
    <interactant intactId="EBI-2856326">
        <id>Q96R05</id>
    </interactant>
    <interactant intactId="EBI-10963850">
        <id>Q9NZQ3-3</id>
        <label>NCKIPSD</label>
    </interactant>
    <organismsDiffer>false</organismsDiffer>
    <experiments>3</experiments>
</comment>
<comment type="interaction">
    <interactant intactId="EBI-2856326">
        <id>Q96R05</id>
    </interactant>
    <interactant intactId="EBI-79893">
        <id>Q92569</id>
        <label>PIK3R3</label>
    </interactant>
    <organismsDiffer>false</organismsDiffer>
    <experiments>3</experiments>
</comment>
<comment type="interaction">
    <interactant intactId="EBI-2856326">
        <id>Q96R05</id>
    </interactant>
    <interactant intactId="EBI-3942425">
        <id>Q8WXH5</id>
        <label>SOCS4</label>
    </interactant>
    <organismsDiffer>false</organismsDiffer>
    <experiments>3</experiments>
</comment>
<comment type="subcellular location">
    <subcellularLocation>
        <location evidence="1">Cytoplasm</location>
    </subcellularLocation>
</comment>
<comment type="tissue specificity">
    <text evidence="2">Expressed primarily in kidney, heart and transverse colon. Detected in adult lymph node, appendix, ascending colon, and in fetal heart and spleen.</text>
</comment>
<comment type="domain">
    <text>Forms a beta-barrel structure that accommodates hydrophobic ligands in its interior.</text>
</comment>
<comment type="similarity">
    <text evidence="3">Belongs to the calycin superfamily. Fatty-acid binding protein (FABP) family.</text>
</comment>
<sequence length="134" mass="15536">MPADLSGTWTLLSSDNFEGYMLALGIDFATRKIAKLLKPQKVIEQNGDSFTIHTNSSLRNYFVKFKVGEEFDEDNRGLDNRKCKSLVIWDNDRLTCIQKGEKKNRGWTHWIEGDKLHLEMFCEGQVCKQTFQRA</sequence>
<reference key="1">
    <citation type="journal article" date="2002" name="J. Biol. Chem.">
        <title>Ligand binding and structural analysis of a human putative cellular retinol-binding protein.</title>
        <authorList>
            <person name="Folli C."/>
            <person name="Calderone V."/>
            <person name="Ramazzina I."/>
            <person name="Zanotti G."/>
            <person name="Berni R."/>
        </authorList>
    </citation>
    <scope>NUCLEOTIDE SEQUENCE [MRNA]</scope>
    <scope>X-RAY CRYSTALLOGRAPHY (2.0 ANGSTROMS)</scope>
    <scope>FUNCTION</scope>
    <scope>CHARACTERIZATION</scope>
    <scope>TISSUE SPECIFICITY</scope>
</reference>
<reference key="2">
    <citation type="submission" date="2001-07" db="EMBL/GenBank/DDBJ databases">
        <authorList>
            <person name="Guo J.H."/>
            <person name="She X.Y."/>
            <person name="Dai F.Y."/>
            <person name="Yu L."/>
        </authorList>
    </citation>
    <scope>NUCLEOTIDE SEQUENCE [LARGE SCALE MRNA]</scope>
</reference>
<reference key="3">
    <citation type="journal article" date="2004" name="Nat. Genet.">
        <title>Complete sequencing and characterization of 21,243 full-length human cDNAs.</title>
        <authorList>
            <person name="Ota T."/>
            <person name="Suzuki Y."/>
            <person name="Nishikawa T."/>
            <person name="Otsuki T."/>
            <person name="Sugiyama T."/>
            <person name="Irie R."/>
            <person name="Wakamatsu A."/>
            <person name="Hayashi K."/>
            <person name="Sato H."/>
            <person name="Nagai K."/>
            <person name="Kimura K."/>
            <person name="Makita H."/>
            <person name="Sekine M."/>
            <person name="Obayashi M."/>
            <person name="Nishi T."/>
            <person name="Shibahara T."/>
            <person name="Tanaka T."/>
            <person name="Ishii S."/>
            <person name="Yamamoto J."/>
            <person name="Saito K."/>
            <person name="Kawai Y."/>
            <person name="Isono Y."/>
            <person name="Nakamura Y."/>
            <person name="Nagahari K."/>
            <person name="Murakami K."/>
            <person name="Yasuda T."/>
            <person name="Iwayanagi T."/>
            <person name="Wagatsuma M."/>
            <person name="Shiratori A."/>
            <person name="Sudo H."/>
            <person name="Hosoiri T."/>
            <person name="Kaku Y."/>
            <person name="Kodaira H."/>
            <person name="Kondo H."/>
            <person name="Sugawara M."/>
            <person name="Takahashi M."/>
            <person name="Kanda K."/>
            <person name="Yokoi T."/>
            <person name="Furuya T."/>
            <person name="Kikkawa E."/>
            <person name="Omura Y."/>
            <person name="Abe K."/>
            <person name="Kamihara K."/>
            <person name="Katsuta N."/>
            <person name="Sato K."/>
            <person name="Tanikawa M."/>
            <person name="Yamazaki M."/>
            <person name="Ninomiya K."/>
            <person name="Ishibashi T."/>
            <person name="Yamashita H."/>
            <person name="Murakawa K."/>
            <person name="Fujimori K."/>
            <person name="Tanai H."/>
            <person name="Kimata M."/>
            <person name="Watanabe M."/>
            <person name="Hiraoka S."/>
            <person name="Chiba Y."/>
            <person name="Ishida S."/>
            <person name="Ono Y."/>
            <person name="Takiguchi S."/>
            <person name="Watanabe S."/>
            <person name="Yosida M."/>
            <person name="Hotuta T."/>
            <person name="Kusano J."/>
            <person name="Kanehori K."/>
            <person name="Takahashi-Fujii A."/>
            <person name="Hara H."/>
            <person name="Tanase T.-O."/>
            <person name="Nomura Y."/>
            <person name="Togiya S."/>
            <person name="Komai F."/>
            <person name="Hara R."/>
            <person name="Takeuchi K."/>
            <person name="Arita M."/>
            <person name="Imose N."/>
            <person name="Musashino K."/>
            <person name="Yuuki H."/>
            <person name="Oshima A."/>
            <person name="Sasaki N."/>
            <person name="Aotsuka S."/>
            <person name="Yoshikawa Y."/>
            <person name="Matsunawa H."/>
            <person name="Ichihara T."/>
            <person name="Shiohata N."/>
            <person name="Sano S."/>
            <person name="Moriya S."/>
            <person name="Momiyama H."/>
            <person name="Satoh N."/>
            <person name="Takami S."/>
            <person name="Terashima Y."/>
            <person name="Suzuki O."/>
            <person name="Nakagawa S."/>
            <person name="Senoh A."/>
            <person name="Mizoguchi H."/>
            <person name="Goto Y."/>
            <person name="Shimizu F."/>
            <person name="Wakebe H."/>
            <person name="Hishigaki H."/>
            <person name="Watanabe T."/>
            <person name="Sugiyama A."/>
            <person name="Takemoto M."/>
            <person name="Kawakami B."/>
            <person name="Yamazaki M."/>
            <person name="Watanabe K."/>
            <person name="Kumagai A."/>
            <person name="Itakura S."/>
            <person name="Fukuzumi Y."/>
            <person name="Fujimori Y."/>
            <person name="Komiyama M."/>
            <person name="Tashiro H."/>
            <person name="Tanigami A."/>
            <person name="Fujiwara T."/>
            <person name="Ono T."/>
            <person name="Yamada K."/>
            <person name="Fujii Y."/>
            <person name="Ozaki K."/>
            <person name="Hirao M."/>
            <person name="Ohmori Y."/>
            <person name="Kawabata A."/>
            <person name="Hikiji T."/>
            <person name="Kobatake N."/>
            <person name="Inagaki H."/>
            <person name="Ikema Y."/>
            <person name="Okamoto S."/>
            <person name="Okitani R."/>
            <person name="Kawakami T."/>
            <person name="Noguchi S."/>
            <person name="Itoh T."/>
            <person name="Shigeta K."/>
            <person name="Senba T."/>
            <person name="Matsumura K."/>
            <person name="Nakajima Y."/>
            <person name="Mizuno T."/>
            <person name="Morinaga M."/>
            <person name="Sasaki M."/>
            <person name="Togashi T."/>
            <person name="Oyama M."/>
            <person name="Hata H."/>
            <person name="Watanabe M."/>
            <person name="Komatsu T."/>
            <person name="Mizushima-Sugano J."/>
            <person name="Satoh T."/>
            <person name="Shirai Y."/>
            <person name="Takahashi Y."/>
            <person name="Nakagawa K."/>
            <person name="Okumura K."/>
            <person name="Nagase T."/>
            <person name="Nomura N."/>
            <person name="Kikuchi H."/>
            <person name="Masuho Y."/>
            <person name="Yamashita R."/>
            <person name="Nakai K."/>
            <person name="Yada T."/>
            <person name="Nakamura Y."/>
            <person name="Ohara O."/>
            <person name="Isogai T."/>
            <person name="Sugano S."/>
        </authorList>
    </citation>
    <scope>NUCLEOTIDE SEQUENCE [LARGE SCALE MRNA]</scope>
    <source>
        <tissue>Substantia nigra</tissue>
    </source>
</reference>
<reference key="4">
    <citation type="journal article" date="2006" name="Nature">
        <title>The DNA sequence and biological annotation of human chromosome 1.</title>
        <authorList>
            <person name="Gregory S.G."/>
            <person name="Barlow K.F."/>
            <person name="McLay K.E."/>
            <person name="Kaul R."/>
            <person name="Swarbreck D."/>
            <person name="Dunham A."/>
            <person name="Scott C.E."/>
            <person name="Howe K.L."/>
            <person name="Woodfine K."/>
            <person name="Spencer C.C.A."/>
            <person name="Jones M.C."/>
            <person name="Gillson C."/>
            <person name="Searle S."/>
            <person name="Zhou Y."/>
            <person name="Kokocinski F."/>
            <person name="McDonald L."/>
            <person name="Evans R."/>
            <person name="Phillips K."/>
            <person name="Atkinson A."/>
            <person name="Cooper R."/>
            <person name="Jones C."/>
            <person name="Hall R.E."/>
            <person name="Andrews T.D."/>
            <person name="Lloyd C."/>
            <person name="Ainscough R."/>
            <person name="Almeida J.P."/>
            <person name="Ambrose K.D."/>
            <person name="Anderson F."/>
            <person name="Andrew R.W."/>
            <person name="Ashwell R.I.S."/>
            <person name="Aubin K."/>
            <person name="Babbage A.K."/>
            <person name="Bagguley C.L."/>
            <person name="Bailey J."/>
            <person name="Beasley H."/>
            <person name="Bethel G."/>
            <person name="Bird C.P."/>
            <person name="Bray-Allen S."/>
            <person name="Brown J.Y."/>
            <person name="Brown A.J."/>
            <person name="Buckley D."/>
            <person name="Burton J."/>
            <person name="Bye J."/>
            <person name="Carder C."/>
            <person name="Chapman J.C."/>
            <person name="Clark S.Y."/>
            <person name="Clarke G."/>
            <person name="Clee C."/>
            <person name="Cobley V."/>
            <person name="Collier R.E."/>
            <person name="Corby N."/>
            <person name="Coville G.J."/>
            <person name="Davies J."/>
            <person name="Deadman R."/>
            <person name="Dunn M."/>
            <person name="Earthrowl M."/>
            <person name="Ellington A.G."/>
            <person name="Errington H."/>
            <person name="Frankish A."/>
            <person name="Frankland J."/>
            <person name="French L."/>
            <person name="Garner P."/>
            <person name="Garnett J."/>
            <person name="Gay L."/>
            <person name="Ghori M.R.J."/>
            <person name="Gibson R."/>
            <person name="Gilby L.M."/>
            <person name="Gillett W."/>
            <person name="Glithero R.J."/>
            <person name="Grafham D.V."/>
            <person name="Griffiths C."/>
            <person name="Griffiths-Jones S."/>
            <person name="Grocock R."/>
            <person name="Hammond S."/>
            <person name="Harrison E.S.I."/>
            <person name="Hart E."/>
            <person name="Haugen E."/>
            <person name="Heath P.D."/>
            <person name="Holmes S."/>
            <person name="Holt K."/>
            <person name="Howden P.J."/>
            <person name="Hunt A.R."/>
            <person name="Hunt S.E."/>
            <person name="Hunter G."/>
            <person name="Isherwood J."/>
            <person name="James R."/>
            <person name="Johnson C."/>
            <person name="Johnson D."/>
            <person name="Joy A."/>
            <person name="Kay M."/>
            <person name="Kershaw J.K."/>
            <person name="Kibukawa M."/>
            <person name="Kimberley A.M."/>
            <person name="King A."/>
            <person name="Knights A.J."/>
            <person name="Lad H."/>
            <person name="Laird G."/>
            <person name="Lawlor S."/>
            <person name="Leongamornlert D.A."/>
            <person name="Lloyd D.M."/>
            <person name="Loveland J."/>
            <person name="Lovell J."/>
            <person name="Lush M.J."/>
            <person name="Lyne R."/>
            <person name="Martin S."/>
            <person name="Mashreghi-Mohammadi M."/>
            <person name="Matthews L."/>
            <person name="Matthews N.S.W."/>
            <person name="McLaren S."/>
            <person name="Milne S."/>
            <person name="Mistry S."/>
            <person name="Moore M.J.F."/>
            <person name="Nickerson T."/>
            <person name="O'Dell C.N."/>
            <person name="Oliver K."/>
            <person name="Palmeiri A."/>
            <person name="Palmer S.A."/>
            <person name="Parker A."/>
            <person name="Patel D."/>
            <person name="Pearce A.V."/>
            <person name="Peck A.I."/>
            <person name="Pelan S."/>
            <person name="Phelps K."/>
            <person name="Phillimore B.J."/>
            <person name="Plumb R."/>
            <person name="Rajan J."/>
            <person name="Raymond C."/>
            <person name="Rouse G."/>
            <person name="Saenphimmachak C."/>
            <person name="Sehra H.K."/>
            <person name="Sheridan E."/>
            <person name="Shownkeen R."/>
            <person name="Sims S."/>
            <person name="Skuce C.D."/>
            <person name="Smith M."/>
            <person name="Steward C."/>
            <person name="Subramanian S."/>
            <person name="Sycamore N."/>
            <person name="Tracey A."/>
            <person name="Tromans A."/>
            <person name="Van Helmond Z."/>
            <person name="Wall M."/>
            <person name="Wallis J.M."/>
            <person name="White S."/>
            <person name="Whitehead S.L."/>
            <person name="Wilkinson J.E."/>
            <person name="Willey D.L."/>
            <person name="Williams H."/>
            <person name="Wilming L."/>
            <person name="Wray P.W."/>
            <person name="Wu Z."/>
            <person name="Coulson A."/>
            <person name="Vaudin M."/>
            <person name="Sulston J.E."/>
            <person name="Durbin R.M."/>
            <person name="Hubbard T."/>
            <person name="Wooster R."/>
            <person name="Dunham I."/>
            <person name="Carter N.P."/>
            <person name="McVean G."/>
            <person name="Ross M.T."/>
            <person name="Harrow J."/>
            <person name="Olson M.V."/>
            <person name="Beck S."/>
            <person name="Rogers J."/>
            <person name="Bentley D.R."/>
        </authorList>
    </citation>
    <scope>NUCLEOTIDE SEQUENCE [LARGE SCALE GENOMIC DNA]</scope>
</reference>
<reference key="5">
    <citation type="submission" date="2005-07" db="EMBL/GenBank/DDBJ databases">
        <authorList>
            <person name="Mural R.J."/>
            <person name="Istrail S."/>
            <person name="Sutton G.G."/>
            <person name="Florea L."/>
            <person name="Halpern A.L."/>
            <person name="Mobarry C.M."/>
            <person name="Lippert R."/>
            <person name="Walenz B."/>
            <person name="Shatkay H."/>
            <person name="Dew I."/>
            <person name="Miller J.R."/>
            <person name="Flanigan M.J."/>
            <person name="Edwards N.J."/>
            <person name="Bolanos R."/>
            <person name="Fasulo D."/>
            <person name="Halldorsson B.V."/>
            <person name="Hannenhalli S."/>
            <person name="Turner R."/>
            <person name="Yooseph S."/>
            <person name="Lu F."/>
            <person name="Nusskern D.R."/>
            <person name="Shue B.C."/>
            <person name="Zheng X.H."/>
            <person name="Zhong F."/>
            <person name="Delcher A.L."/>
            <person name="Huson D.H."/>
            <person name="Kravitz S.A."/>
            <person name="Mouchard L."/>
            <person name="Reinert K."/>
            <person name="Remington K.A."/>
            <person name="Clark A.G."/>
            <person name="Waterman M.S."/>
            <person name="Eichler E.E."/>
            <person name="Adams M.D."/>
            <person name="Hunkapiller M.W."/>
            <person name="Myers E.W."/>
            <person name="Venter J.C."/>
        </authorList>
    </citation>
    <scope>NUCLEOTIDE SEQUENCE [LARGE SCALE GENOMIC DNA]</scope>
</reference>
<reference key="6">
    <citation type="journal article" date="2004" name="Genome Res.">
        <title>The status, quality, and expansion of the NIH full-length cDNA project: the Mammalian Gene Collection (MGC).</title>
        <authorList>
            <consortium name="The MGC Project Team"/>
        </authorList>
    </citation>
    <scope>NUCLEOTIDE SEQUENCE [LARGE SCALE MRNA]</scope>
    <source>
        <tissue>Pancreas</tissue>
    </source>
</reference>
<protein>
    <recommendedName>
        <fullName>Retinoid-binding protein 7</fullName>
    </recommendedName>
    <alternativeName>
        <fullName>Cellular retinoic acid-binding protein 4</fullName>
        <shortName>CRABP4</shortName>
        <shortName>CRBP4</shortName>
    </alternativeName>
    <alternativeName>
        <fullName>Cellular retinoic acid-binding protein IV</fullName>
        <shortName>CRABP-IV</shortName>
    </alternativeName>
</protein>